<sequence length="393" mass="45903">MNISTTRKDFMIVNMGPHHPSMHGVLRLIVTLDGEDVIDCEPILGYLHRGMEKIAENRTIIQYLPYVTRWDYLATMFTEAITVNGPEQLGNIQVPKRASYIRVIMLELSRIASHLLWLGPFMADIGAQTPFFYIFRERELIYDLFEAATGMRMMHNFFRIGGVATDLPYGWVDKCYDFCDYFLTRIVEYQKLITRNPIFLERVEGVGVVDIKEVINWGLSGPMLRASGIQWDLRKVDNYECYEEFDWEVQWQKEGDSLARYLVRIGEMMESIKIIQQALEGIPGGPYENLEIRCFDREKEPEWNEFEYRFISKKPSPTFELPKQELYVRIEAPKGELGIFLIGDQNGFPWRWKIRPPGFINLQILPQLVKRMKLADIMTILGSIDIIMGEVDR</sequence>
<feature type="chain" id="PRO_0000277451" description="NAD(P)H-quinone oxidoreductase subunit H, chloroplastic">
    <location>
        <begin position="1"/>
        <end position="393"/>
    </location>
</feature>
<proteinExistence type="inferred from homology"/>
<geneLocation type="chloroplast"/>
<reference key="1">
    <citation type="journal article" date="2005" name="Plant Mol. Biol.">
        <title>Complete chloroplast genome sequence of Glycine max and comparative analyses with other legume genomes.</title>
        <authorList>
            <person name="Saski C."/>
            <person name="Lee S.-B."/>
            <person name="Daniell H."/>
            <person name="Wood T.C."/>
            <person name="Tomkins J."/>
            <person name="Kim H.-G."/>
            <person name="Jansen R.K."/>
        </authorList>
    </citation>
    <scope>NUCLEOTIDE SEQUENCE [LARGE SCALE GENOMIC DNA]</scope>
    <source>
        <strain>cv. PI 437654</strain>
    </source>
</reference>
<gene>
    <name evidence="1" type="primary">ndhH</name>
</gene>
<name>NDHH_SOYBN</name>
<protein>
    <recommendedName>
        <fullName evidence="1">NAD(P)H-quinone oxidoreductase subunit H, chloroplastic</fullName>
        <ecNumber evidence="1">7.1.1.-</ecNumber>
    </recommendedName>
    <alternativeName>
        <fullName>NAD(P)H dehydrogenase subunit H</fullName>
    </alternativeName>
    <alternativeName>
        <fullName evidence="1">NADH-plastoquinone oxidoreductase 49 kDa subunit</fullName>
    </alternativeName>
    <alternativeName>
        <fullName evidence="1">NADH-plastoquinone oxidoreductase subunit H</fullName>
    </alternativeName>
</protein>
<organism>
    <name type="scientific">Glycine max</name>
    <name type="common">Soybean</name>
    <name type="synonym">Glycine hispida</name>
    <dbReference type="NCBI Taxonomy" id="3847"/>
    <lineage>
        <taxon>Eukaryota</taxon>
        <taxon>Viridiplantae</taxon>
        <taxon>Streptophyta</taxon>
        <taxon>Embryophyta</taxon>
        <taxon>Tracheophyta</taxon>
        <taxon>Spermatophyta</taxon>
        <taxon>Magnoliopsida</taxon>
        <taxon>eudicotyledons</taxon>
        <taxon>Gunneridae</taxon>
        <taxon>Pentapetalae</taxon>
        <taxon>rosids</taxon>
        <taxon>fabids</taxon>
        <taxon>Fabales</taxon>
        <taxon>Fabaceae</taxon>
        <taxon>Papilionoideae</taxon>
        <taxon>50 kb inversion clade</taxon>
        <taxon>NPAAA clade</taxon>
        <taxon>indigoferoid/millettioid clade</taxon>
        <taxon>Phaseoleae</taxon>
        <taxon>Glycine</taxon>
        <taxon>Glycine subgen. Soja</taxon>
    </lineage>
</organism>
<accession>Q2PMN8</accession>
<evidence type="ECO:0000255" key="1">
    <source>
        <dbReference type="HAMAP-Rule" id="MF_01358"/>
    </source>
</evidence>
<dbReference type="EC" id="7.1.1.-" evidence="1"/>
<dbReference type="EMBL" id="DQ317523">
    <property type="protein sequence ID" value="ABC25171.1"/>
    <property type="molecule type" value="Genomic_DNA"/>
</dbReference>
<dbReference type="RefSeq" id="YP_538812.1">
    <property type="nucleotide sequence ID" value="NC_007942.1"/>
</dbReference>
<dbReference type="SMR" id="Q2PMN8"/>
<dbReference type="FunCoup" id="Q2PMN8">
    <property type="interactions" value="12"/>
</dbReference>
<dbReference type="STRING" id="3847.Q2PMN8"/>
<dbReference type="PaxDb" id="3847-GLYMA20G21301.1"/>
<dbReference type="GeneID" id="3989355"/>
<dbReference type="KEGG" id="gmx:3989355"/>
<dbReference type="eggNOG" id="KOG2870">
    <property type="taxonomic scope" value="Eukaryota"/>
</dbReference>
<dbReference type="eggNOG" id="KOG4770">
    <property type="taxonomic scope" value="Eukaryota"/>
</dbReference>
<dbReference type="InParanoid" id="Q2PMN8"/>
<dbReference type="Proteomes" id="UP000008827">
    <property type="component" value="Chloroplast"/>
</dbReference>
<dbReference type="GO" id="GO:0009535">
    <property type="term" value="C:chloroplast thylakoid membrane"/>
    <property type="evidence" value="ECO:0007669"/>
    <property type="project" value="UniProtKB-SubCell"/>
</dbReference>
<dbReference type="GO" id="GO:0051287">
    <property type="term" value="F:NAD binding"/>
    <property type="evidence" value="ECO:0007669"/>
    <property type="project" value="InterPro"/>
</dbReference>
<dbReference type="GO" id="GO:0016655">
    <property type="term" value="F:oxidoreductase activity, acting on NAD(P)H, quinone or similar compound as acceptor"/>
    <property type="evidence" value="ECO:0007669"/>
    <property type="project" value="UniProtKB-UniRule"/>
</dbReference>
<dbReference type="GO" id="GO:0048038">
    <property type="term" value="F:quinone binding"/>
    <property type="evidence" value="ECO:0007669"/>
    <property type="project" value="UniProtKB-KW"/>
</dbReference>
<dbReference type="GO" id="GO:0019684">
    <property type="term" value="P:photosynthesis, light reaction"/>
    <property type="evidence" value="ECO:0007669"/>
    <property type="project" value="UniProtKB-UniRule"/>
</dbReference>
<dbReference type="FunFam" id="1.10.645.10:FF:000003">
    <property type="entry name" value="NAD(P)H-quinone oxidoreductase subunit H, chloroplastic"/>
    <property type="match status" value="1"/>
</dbReference>
<dbReference type="Gene3D" id="1.10.645.10">
    <property type="entry name" value="Cytochrome-c3 Hydrogenase, chain B"/>
    <property type="match status" value="1"/>
</dbReference>
<dbReference type="HAMAP" id="MF_01358">
    <property type="entry name" value="NDH1_NuoD"/>
    <property type="match status" value="1"/>
</dbReference>
<dbReference type="InterPro" id="IPR001135">
    <property type="entry name" value="NADH_Q_OxRdtase_suD"/>
</dbReference>
<dbReference type="InterPro" id="IPR014029">
    <property type="entry name" value="NADH_UbQ_OxRdtase_49kDa_CS"/>
</dbReference>
<dbReference type="InterPro" id="IPR022885">
    <property type="entry name" value="NDH1_su_D/H"/>
</dbReference>
<dbReference type="InterPro" id="IPR029014">
    <property type="entry name" value="NiFe-Hase_large"/>
</dbReference>
<dbReference type="NCBIfam" id="NF004739">
    <property type="entry name" value="PRK06075.1"/>
    <property type="match status" value="1"/>
</dbReference>
<dbReference type="NCBIfam" id="NF005649">
    <property type="entry name" value="PRK07415.1"/>
    <property type="match status" value="1"/>
</dbReference>
<dbReference type="PANTHER" id="PTHR11993:SF10">
    <property type="entry name" value="NADH DEHYDROGENASE [UBIQUINONE] IRON-SULFUR PROTEIN 2, MITOCHONDRIAL"/>
    <property type="match status" value="1"/>
</dbReference>
<dbReference type="PANTHER" id="PTHR11993">
    <property type="entry name" value="NADH-UBIQUINONE OXIDOREDUCTASE 49 KDA SUBUNIT"/>
    <property type="match status" value="1"/>
</dbReference>
<dbReference type="Pfam" id="PF00346">
    <property type="entry name" value="Complex1_49kDa"/>
    <property type="match status" value="1"/>
</dbReference>
<dbReference type="SUPFAM" id="SSF56762">
    <property type="entry name" value="HydB/Nqo4-like"/>
    <property type="match status" value="1"/>
</dbReference>
<dbReference type="PROSITE" id="PS00535">
    <property type="entry name" value="COMPLEX1_49K"/>
    <property type="match status" value="1"/>
</dbReference>
<comment type="function">
    <text evidence="1">NDH shuttles electrons from NAD(P)H:plastoquinone, via FMN and iron-sulfur (Fe-S) centers, to quinones in the photosynthetic chain and possibly in a chloroplast respiratory chain. The immediate electron acceptor for the enzyme in this species is believed to be plastoquinone. Couples the redox reaction to proton translocation, and thus conserves the redox energy in a proton gradient.</text>
</comment>
<comment type="catalytic activity">
    <reaction evidence="1">
        <text>a plastoquinone + NADH + (n+1) H(+)(in) = a plastoquinol + NAD(+) + n H(+)(out)</text>
        <dbReference type="Rhea" id="RHEA:42608"/>
        <dbReference type="Rhea" id="RHEA-COMP:9561"/>
        <dbReference type="Rhea" id="RHEA-COMP:9562"/>
        <dbReference type="ChEBI" id="CHEBI:15378"/>
        <dbReference type="ChEBI" id="CHEBI:17757"/>
        <dbReference type="ChEBI" id="CHEBI:57540"/>
        <dbReference type="ChEBI" id="CHEBI:57945"/>
        <dbReference type="ChEBI" id="CHEBI:62192"/>
    </reaction>
</comment>
<comment type="catalytic activity">
    <reaction evidence="1">
        <text>a plastoquinone + NADPH + (n+1) H(+)(in) = a plastoquinol + NADP(+) + n H(+)(out)</text>
        <dbReference type="Rhea" id="RHEA:42612"/>
        <dbReference type="Rhea" id="RHEA-COMP:9561"/>
        <dbReference type="Rhea" id="RHEA-COMP:9562"/>
        <dbReference type="ChEBI" id="CHEBI:15378"/>
        <dbReference type="ChEBI" id="CHEBI:17757"/>
        <dbReference type="ChEBI" id="CHEBI:57783"/>
        <dbReference type="ChEBI" id="CHEBI:58349"/>
        <dbReference type="ChEBI" id="CHEBI:62192"/>
    </reaction>
</comment>
<comment type="subunit">
    <text evidence="1">NDH is composed of at least 16 different subunits, 5 of which are encoded in the nucleus.</text>
</comment>
<comment type="subcellular location">
    <subcellularLocation>
        <location evidence="1">Plastid</location>
        <location evidence="1">Chloroplast thylakoid membrane</location>
        <topology evidence="1">Peripheral membrane protein</topology>
        <orientation evidence="1">Stromal side</orientation>
    </subcellularLocation>
</comment>
<comment type="similarity">
    <text evidence="1">Belongs to the complex I 49 kDa subunit family.</text>
</comment>
<keyword id="KW-0150">Chloroplast</keyword>
<keyword id="KW-0472">Membrane</keyword>
<keyword id="KW-0520">NAD</keyword>
<keyword id="KW-0521">NADP</keyword>
<keyword id="KW-0934">Plastid</keyword>
<keyword id="KW-0618">Plastoquinone</keyword>
<keyword id="KW-0874">Quinone</keyword>
<keyword id="KW-1185">Reference proteome</keyword>
<keyword id="KW-0793">Thylakoid</keyword>
<keyword id="KW-1278">Translocase</keyword>
<keyword id="KW-0813">Transport</keyword>